<comment type="catalytic activity">
    <reaction>
        <text>L-seryl-[protein] + ATP = O-phospho-L-seryl-[protein] + ADP + H(+)</text>
        <dbReference type="Rhea" id="RHEA:17989"/>
        <dbReference type="Rhea" id="RHEA-COMP:9863"/>
        <dbReference type="Rhea" id="RHEA-COMP:11604"/>
        <dbReference type="ChEBI" id="CHEBI:15378"/>
        <dbReference type="ChEBI" id="CHEBI:29999"/>
        <dbReference type="ChEBI" id="CHEBI:30616"/>
        <dbReference type="ChEBI" id="CHEBI:83421"/>
        <dbReference type="ChEBI" id="CHEBI:456216"/>
        <dbReference type="EC" id="2.7.11.1"/>
    </reaction>
</comment>
<comment type="catalytic activity">
    <reaction>
        <text>L-threonyl-[protein] + ATP = O-phospho-L-threonyl-[protein] + ADP + H(+)</text>
        <dbReference type="Rhea" id="RHEA:46608"/>
        <dbReference type="Rhea" id="RHEA-COMP:11060"/>
        <dbReference type="Rhea" id="RHEA-COMP:11605"/>
        <dbReference type="ChEBI" id="CHEBI:15378"/>
        <dbReference type="ChEBI" id="CHEBI:30013"/>
        <dbReference type="ChEBI" id="CHEBI:30616"/>
        <dbReference type="ChEBI" id="CHEBI:61977"/>
        <dbReference type="ChEBI" id="CHEBI:456216"/>
        <dbReference type="EC" id="2.7.11.1"/>
    </reaction>
</comment>
<comment type="interaction">
    <interactant intactId="EBI-20652801">
        <id>C0LGN2</id>
    </interactant>
    <interactant intactId="EBI-20651261">
        <id>Q9SHI2</id>
        <label>At1g17230</label>
    </interactant>
    <organismsDiffer>false</organismsDiffer>
    <experiments>3</experiments>
</comment>
<comment type="interaction">
    <interactant intactId="EBI-20652801">
        <id>C0LGN2</id>
    </interactant>
    <interactant intactId="EBI-20651291">
        <id>Q9LP24-3</id>
        <label>At1g35710</label>
    </interactant>
    <organismsDiffer>false</organismsDiffer>
    <experiments>3</experiments>
</comment>
<comment type="interaction">
    <interactant intactId="EBI-20652801">
        <id>C0LGN2</id>
    </interactant>
    <interactant intactId="EBI-20651541">
        <id>C0LGJ9</id>
        <label>At2g02780</label>
    </interactant>
    <organismsDiffer>false</organismsDiffer>
    <experiments>2</experiments>
</comment>
<comment type="interaction">
    <interactant intactId="EBI-20652801">
        <id>C0LGN2</id>
    </interactant>
    <interactant intactId="EBI-16964970">
        <id>C0LGU5</id>
        <label>At5g45780</label>
    </interactant>
    <organismsDiffer>false</organismsDiffer>
    <experiments>3</experiments>
</comment>
<comment type="interaction">
    <interactant intactId="EBI-20652801">
        <id>C0LGN2</id>
    </interactant>
    <interactant intactId="EBI-20653325">
        <id>O65440-2</id>
        <label>BAM3</label>
    </interactant>
    <organismsDiffer>false</organismsDiffer>
    <experiments>3</experiments>
</comment>
<comment type="interaction">
    <interactant intactId="EBI-20652801">
        <id>C0LGN2</id>
    </interactant>
    <interactant intactId="EBI-1544507">
        <id>Q9LP77</id>
        <label>RKL1</label>
    </interactant>
    <organismsDiffer>false</organismsDiffer>
    <experiments>3</experiments>
</comment>
<comment type="subcellular location">
    <subcellularLocation>
        <location evidence="7">Cell membrane</location>
        <topology evidence="7">Single-pass type I membrane protein</topology>
    </subcellularLocation>
</comment>
<comment type="alternative products">
    <event type="alternative splicing"/>
    <isoform>
        <id>C0LGN2-1</id>
        <name>1</name>
        <sequence type="displayed"/>
    </isoform>
    <isoform>
        <id>C0LGN2-2</id>
        <name>2</name>
        <sequence type="described" ref="VSP_040160 VSP_040161"/>
    </isoform>
</comment>
<comment type="similarity">
    <text evidence="3">Belongs to the protein kinase superfamily. Ser/Thr protein kinase family.</text>
</comment>
<comment type="sequence caution" evidence="6">
    <conflict type="erroneous gene model prediction">
        <sequence resource="EMBL-CDS" id="BAB02650"/>
    </conflict>
</comment>
<evidence type="ECO:0000250" key="1">
    <source>
        <dbReference type="UniProtKB" id="O48814"/>
    </source>
</evidence>
<evidence type="ECO:0000255" key="2"/>
<evidence type="ECO:0000255" key="3">
    <source>
        <dbReference type="PROSITE-ProRule" id="PRU00159"/>
    </source>
</evidence>
<evidence type="ECO:0000255" key="4">
    <source>
        <dbReference type="PROSITE-ProRule" id="PRU10027"/>
    </source>
</evidence>
<evidence type="ECO:0000303" key="5">
    <source>
    </source>
</evidence>
<evidence type="ECO:0000305" key="6"/>
<evidence type="ECO:0000305" key="7">
    <source>
    </source>
</evidence>
<dbReference type="EC" id="2.7.11.1"/>
<dbReference type="EMBL" id="AP002061">
    <property type="protein sequence ID" value="BAB02650.1"/>
    <property type="status" value="ALT_SEQ"/>
    <property type="molecule type" value="Genomic_DNA"/>
</dbReference>
<dbReference type="EMBL" id="CP002686">
    <property type="protein sequence ID" value="AEE75573.1"/>
    <property type="molecule type" value="Genomic_DNA"/>
</dbReference>
<dbReference type="EMBL" id="CP002686">
    <property type="protein sequence ID" value="AEE75574.1"/>
    <property type="molecule type" value="Genomic_DNA"/>
</dbReference>
<dbReference type="EMBL" id="AF389296">
    <property type="protein sequence ID" value="AAK63868.1"/>
    <property type="molecule type" value="mRNA"/>
</dbReference>
<dbReference type="EMBL" id="AY091678">
    <property type="protein sequence ID" value="AAM10277.1"/>
    <property type="molecule type" value="mRNA"/>
</dbReference>
<dbReference type="EMBL" id="FJ708722">
    <property type="protein sequence ID" value="ACN59317.1"/>
    <property type="molecule type" value="mRNA"/>
</dbReference>
<dbReference type="RefSeq" id="NP_188102.5">
    <molecule id="C0LGN2-1"/>
    <property type="nucleotide sequence ID" value="NM_112345.7"/>
</dbReference>
<dbReference type="RefSeq" id="NP_566494.1">
    <molecule id="C0LGN2-2"/>
    <property type="nucleotide sequence ID" value="NM_112346.4"/>
</dbReference>
<dbReference type="SMR" id="C0LGN2"/>
<dbReference type="BioGRID" id="6047">
    <property type="interactions" value="39"/>
</dbReference>
<dbReference type="FunCoup" id="C0LGN2">
    <property type="interactions" value="165"/>
</dbReference>
<dbReference type="IntAct" id="C0LGN2">
    <property type="interactions" value="38"/>
</dbReference>
<dbReference type="STRING" id="3702.C0LGN2"/>
<dbReference type="CAZy" id="CBM57">
    <property type="family name" value="Carbohydrate-Binding Module Family 57"/>
</dbReference>
<dbReference type="GlyCosmos" id="C0LGN2">
    <property type="glycosylation" value="15 sites, No reported glycans"/>
</dbReference>
<dbReference type="GlyGen" id="C0LGN2">
    <property type="glycosylation" value="15 sites"/>
</dbReference>
<dbReference type="iPTMnet" id="C0LGN2"/>
<dbReference type="SwissPalm" id="C0LGN2"/>
<dbReference type="PaxDb" id="3702-AT3G14840.2"/>
<dbReference type="ProteomicsDB" id="242863">
    <molecule id="C0LGN2-1"/>
</dbReference>
<dbReference type="EnsemblPlants" id="AT3G14840.1">
    <molecule id="C0LGN2-2"/>
    <property type="protein sequence ID" value="AT3G14840.1"/>
    <property type="gene ID" value="AT3G14840"/>
</dbReference>
<dbReference type="EnsemblPlants" id="AT3G14840.2">
    <molecule id="C0LGN2-1"/>
    <property type="protein sequence ID" value="AT3G14840.2"/>
    <property type="gene ID" value="AT3G14840"/>
</dbReference>
<dbReference type="GeneID" id="820713"/>
<dbReference type="Gramene" id="AT3G14840.1">
    <molecule id="C0LGN2-2"/>
    <property type="protein sequence ID" value="AT3G14840.1"/>
    <property type="gene ID" value="AT3G14840"/>
</dbReference>
<dbReference type="Gramene" id="AT3G14840.2">
    <molecule id="C0LGN2-1"/>
    <property type="protein sequence ID" value="AT3G14840.2"/>
    <property type="gene ID" value="AT3G14840"/>
</dbReference>
<dbReference type="KEGG" id="ath:AT3G14840"/>
<dbReference type="Araport" id="AT3G14840"/>
<dbReference type="TAIR" id="AT3G14840">
    <property type="gene designation" value="LIK1"/>
</dbReference>
<dbReference type="eggNOG" id="ENOG502QVI9">
    <property type="taxonomic scope" value="Eukaryota"/>
</dbReference>
<dbReference type="HOGENOM" id="CLU_000288_114_2_1"/>
<dbReference type="InParanoid" id="C0LGN2"/>
<dbReference type="OMA" id="AYWNTRT"/>
<dbReference type="PhylomeDB" id="C0LGN2"/>
<dbReference type="PRO" id="PR:C0LGN2"/>
<dbReference type="Proteomes" id="UP000006548">
    <property type="component" value="Chromosome 3"/>
</dbReference>
<dbReference type="ExpressionAtlas" id="C0LGN2">
    <property type="expression patterns" value="baseline and differential"/>
</dbReference>
<dbReference type="GO" id="GO:0005829">
    <property type="term" value="C:cytosol"/>
    <property type="evidence" value="ECO:0007005"/>
    <property type="project" value="TAIR"/>
</dbReference>
<dbReference type="GO" id="GO:0005886">
    <property type="term" value="C:plasma membrane"/>
    <property type="evidence" value="ECO:0007005"/>
    <property type="project" value="TAIR"/>
</dbReference>
<dbReference type="GO" id="GO:0009506">
    <property type="term" value="C:plasmodesma"/>
    <property type="evidence" value="ECO:0007005"/>
    <property type="project" value="TAIR"/>
</dbReference>
<dbReference type="GO" id="GO:0005524">
    <property type="term" value="F:ATP binding"/>
    <property type="evidence" value="ECO:0007669"/>
    <property type="project" value="UniProtKB-KW"/>
</dbReference>
<dbReference type="GO" id="GO:0106310">
    <property type="term" value="F:protein serine kinase activity"/>
    <property type="evidence" value="ECO:0007669"/>
    <property type="project" value="RHEA"/>
</dbReference>
<dbReference type="GO" id="GO:0004674">
    <property type="term" value="F:protein serine/threonine kinase activity"/>
    <property type="evidence" value="ECO:0007669"/>
    <property type="project" value="UniProtKB-KW"/>
</dbReference>
<dbReference type="GO" id="GO:0009861">
    <property type="term" value="P:jasmonic acid and ethylene-dependent systemic resistance"/>
    <property type="evidence" value="ECO:0000315"/>
    <property type="project" value="TAIR"/>
</dbReference>
<dbReference type="GO" id="GO:0045088">
    <property type="term" value="P:regulation of innate immune response"/>
    <property type="evidence" value="ECO:0000315"/>
    <property type="project" value="TAIR"/>
</dbReference>
<dbReference type="CDD" id="cd14066">
    <property type="entry name" value="STKc_IRAK"/>
    <property type="match status" value="1"/>
</dbReference>
<dbReference type="FunFam" id="3.80.10.10:FF:001022">
    <property type="entry name" value="Probable LRR receptor-like serine/threonine-protein kinase At1g53420"/>
    <property type="match status" value="1"/>
</dbReference>
<dbReference type="FunFam" id="3.80.10.10:FF:001334">
    <property type="entry name" value="Probable LRR receptor-like serine/threonine-protein kinase At1g53420"/>
    <property type="match status" value="1"/>
</dbReference>
<dbReference type="FunFam" id="3.30.200.20:FF:000217">
    <property type="entry name" value="probable LRR receptor-like serine/threonine-protein kinase At1g53430"/>
    <property type="match status" value="1"/>
</dbReference>
<dbReference type="FunFam" id="2.60.120.430:FF:000004">
    <property type="entry name" value="Putative leucine-rich repeat receptor-like serine/threonine-protein kinase"/>
    <property type="match status" value="1"/>
</dbReference>
<dbReference type="FunFam" id="1.10.510.10:FF:000044">
    <property type="entry name" value="Putative LRR receptor-like serine/threonine-protein kinase"/>
    <property type="match status" value="1"/>
</dbReference>
<dbReference type="Gene3D" id="2.60.120.430">
    <property type="entry name" value="Galactose-binding lectin"/>
    <property type="match status" value="1"/>
</dbReference>
<dbReference type="Gene3D" id="3.30.200.20">
    <property type="entry name" value="Phosphorylase Kinase, domain 1"/>
    <property type="match status" value="1"/>
</dbReference>
<dbReference type="Gene3D" id="3.80.10.10">
    <property type="entry name" value="Ribonuclease Inhibitor"/>
    <property type="match status" value="2"/>
</dbReference>
<dbReference type="Gene3D" id="1.10.510.10">
    <property type="entry name" value="Transferase(Phosphotransferase) domain 1"/>
    <property type="match status" value="1"/>
</dbReference>
<dbReference type="InterPro" id="IPR011009">
    <property type="entry name" value="Kinase-like_dom_sf"/>
</dbReference>
<dbReference type="InterPro" id="IPR001611">
    <property type="entry name" value="Leu-rich_rpt"/>
</dbReference>
<dbReference type="InterPro" id="IPR032675">
    <property type="entry name" value="LRR_dom_sf"/>
</dbReference>
<dbReference type="InterPro" id="IPR051824">
    <property type="entry name" value="LRR_Rcpt-Like_S/T_Kinase"/>
</dbReference>
<dbReference type="InterPro" id="IPR021720">
    <property type="entry name" value="Malectin_dom"/>
</dbReference>
<dbReference type="InterPro" id="IPR000719">
    <property type="entry name" value="Prot_kinase_dom"/>
</dbReference>
<dbReference type="InterPro" id="IPR001245">
    <property type="entry name" value="Ser-Thr/Tyr_kinase_cat_dom"/>
</dbReference>
<dbReference type="InterPro" id="IPR008271">
    <property type="entry name" value="Ser/Thr_kinase_AS"/>
</dbReference>
<dbReference type="PANTHER" id="PTHR48006">
    <property type="entry name" value="LEUCINE-RICH REPEAT-CONTAINING PROTEIN DDB_G0281931-RELATED"/>
    <property type="match status" value="1"/>
</dbReference>
<dbReference type="PANTHER" id="PTHR48006:SF81">
    <property type="entry name" value="PROTEIN KINASE DOMAIN-CONTAINING PROTEIN"/>
    <property type="match status" value="1"/>
</dbReference>
<dbReference type="Pfam" id="PF00560">
    <property type="entry name" value="LRR_1"/>
    <property type="match status" value="5"/>
</dbReference>
<dbReference type="Pfam" id="PF11721">
    <property type="entry name" value="Malectin"/>
    <property type="match status" value="1"/>
</dbReference>
<dbReference type="Pfam" id="PF07714">
    <property type="entry name" value="PK_Tyr_Ser-Thr"/>
    <property type="match status" value="1"/>
</dbReference>
<dbReference type="SMART" id="SM00220">
    <property type="entry name" value="S_TKc"/>
    <property type="match status" value="1"/>
</dbReference>
<dbReference type="SUPFAM" id="SSF52058">
    <property type="entry name" value="L domain-like"/>
    <property type="match status" value="1"/>
</dbReference>
<dbReference type="SUPFAM" id="SSF56112">
    <property type="entry name" value="Protein kinase-like (PK-like)"/>
    <property type="match status" value="1"/>
</dbReference>
<dbReference type="PROSITE" id="PS50011">
    <property type="entry name" value="PROTEIN_KINASE_DOM"/>
    <property type="match status" value="1"/>
</dbReference>
<dbReference type="PROSITE" id="PS00108">
    <property type="entry name" value="PROTEIN_KINASE_ST"/>
    <property type="match status" value="1"/>
</dbReference>
<feature type="signal peptide" evidence="2">
    <location>
        <begin position="1"/>
        <end position="26"/>
    </location>
</feature>
<feature type="chain" id="PRO_0000401333" description="Probable leucine-rich repeat receptor-like serine/threonine-protein kinase At3g14840">
    <location>
        <begin position="27"/>
        <end position="1020"/>
    </location>
</feature>
<feature type="topological domain" description="Extracellular" evidence="2">
    <location>
        <begin position="27"/>
        <end position="614"/>
    </location>
</feature>
<feature type="transmembrane region" description="Helical" evidence="2">
    <location>
        <begin position="615"/>
        <end position="635"/>
    </location>
</feature>
<feature type="topological domain" description="Cytoplasmic" evidence="2">
    <location>
        <begin position="636"/>
        <end position="1020"/>
    </location>
</feature>
<feature type="repeat" description="LRR 1">
    <location>
        <begin position="86"/>
        <end position="110"/>
    </location>
</feature>
<feature type="repeat" description="LRR 2">
    <location>
        <begin position="111"/>
        <end position="134"/>
    </location>
</feature>
<feature type="repeat" description="LRR 3">
    <location>
        <begin position="136"/>
        <end position="157"/>
    </location>
</feature>
<feature type="repeat" description="LRR 4">
    <location>
        <begin position="158"/>
        <end position="181"/>
    </location>
</feature>
<feature type="repeat" description="LRR 5">
    <location>
        <begin position="182"/>
        <end position="204"/>
    </location>
</feature>
<feature type="repeat" description="LRR 6">
    <location>
        <begin position="206"/>
        <end position="231"/>
    </location>
</feature>
<feature type="repeat" description="LRR 7">
    <location>
        <begin position="253"/>
        <end position="276"/>
    </location>
</feature>
<feature type="repeat" description="LRR 8">
    <location>
        <begin position="277"/>
        <end position="301"/>
    </location>
</feature>
<feature type="repeat" description="LRR 9">
    <location>
        <begin position="302"/>
        <end position="324"/>
    </location>
</feature>
<feature type="repeat" description="LRR 10">
    <location>
        <begin position="326"/>
        <end position="349"/>
    </location>
</feature>
<feature type="repeat" description="LRR 11">
    <location>
        <begin position="479"/>
        <end position="501"/>
    </location>
</feature>
<feature type="domain" description="Protein kinase" evidence="3">
    <location>
        <begin position="672"/>
        <end position="949"/>
    </location>
</feature>
<feature type="active site" description="Proton acceptor" evidence="3 4">
    <location>
        <position position="798"/>
    </location>
</feature>
<feature type="binding site" evidence="3">
    <location>
        <begin position="678"/>
        <end position="686"/>
    </location>
    <ligand>
        <name>ATP</name>
        <dbReference type="ChEBI" id="CHEBI:30616"/>
    </ligand>
</feature>
<feature type="binding site" evidence="3">
    <location>
        <position position="700"/>
    </location>
    <ligand>
        <name>ATP</name>
        <dbReference type="ChEBI" id="CHEBI:30616"/>
    </ligand>
</feature>
<feature type="modified residue" description="Phosphotyrosine" evidence="1">
    <location>
        <position position="745"/>
    </location>
</feature>
<feature type="modified residue" description="Phosphoserine" evidence="1">
    <location>
        <position position="831"/>
    </location>
</feature>
<feature type="modified residue" description="Phosphothreonine" evidence="1">
    <location>
        <position position="832"/>
    </location>
</feature>
<feature type="modified residue" description="Phosphothreonine" evidence="1">
    <location>
        <position position="837"/>
    </location>
</feature>
<feature type="modified residue" description="Phosphotyrosine" evidence="1">
    <location>
        <position position="845"/>
    </location>
</feature>
<feature type="glycosylation site" description="N-linked (GlcNAc...) asparagine" evidence="2">
    <location>
        <position position="50"/>
    </location>
</feature>
<feature type="glycosylation site" description="N-linked (GlcNAc...) asparagine" evidence="2">
    <location>
        <position position="81"/>
    </location>
</feature>
<feature type="glycosylation site" description="N-linked (GlcNAc...) asparagine" evidence="2">
    <location>
        <position position="124"/>
    </location>
</feature>
<feature type="glycosylation site" description="N-linked (GlcNAc...) asparagine" evidence="2">
    <location>
        <position position="138"/>
    </location>
</feature>
<feature type="glycosylation site" description="N-linked (GlcNAc...) asparagine" evidence="2">
    <location>
        <position position="156"/>
    </location>
</feature>
<feature type="glycosylation site" description="N-linked (GlcNAc...) asparagine" evidence="2">
    <location>
        <position position="193"/>
    </location>
</feature>
<feature type="glycosylation site" description="N-linked (GlcNAc...) asparagine" evidence="2">
    <location>
        <position position="276"/>
    </location>
</feature>
<feature type="glycosylation site" description="N-linked (GlcNAc...) asparagine" evidence="2">
    <location>
        <position position="289"/>
    </location>
</feature>
<feature type="glycosylation site" description="N-linked (GlcNAc...) asparagine" evidence="2">
    <location>
        <position position="359"/>
    </location>
</feature>
<feature type="glycosylation site" description="N-linked (GlcNAc...) asparagine" evidence="2">
    <location>
        <position position="386"/>
    </location>
</feature>
<feature type="glycosylation site" description="N-linked (GlcNAc...) asparagine" evidence="2">
    <location>
        <position position="389"/>
    </location>
</feature>
<feature type="glycosylation site" description="N-linked (GlcNAc...) asparagine" evidence="2">
    <location>
        <position position="417"/>
    </location>
</feature>
<feature type="glycosylation site" description="N-linked (GlcNAc...) asparagine" evidence="2">
    <location>
        <position position="461"/>
    </location>
</feature>
<feature type="glycosylation site" description="N-linked (GlcNAc...) asparagine" evidence="2">
    <location>
        <position position="469"/>
    </location>
</feature>
<feature type="glycosylation site" description="N-linked (GlcNAc...) asparagine" evidence="2">
    <location>
        <position position="498"/>
    </location>
</feature>
<feature type="splice variant" id="VSP_040160" description="In isoform 2." evidence="5">
    <original>IVLKAQDLQGSLPTDLSGLPF</original>
    <variation>MCVLLSFSTSYLFFVKIIINI</variation>
    <location>
        <begin position="92"/>
        <end position="112"/>
    </location>
</feature>
<feature type="splice variant" id="VSP_040161" description="In isoform 2." evidence="5">
    <location>
        <begin position="113"/>
        <end position="1020"/>
    </location>
</feature>
<proteinExistence type="evidence at protein level"/>
<protein>
    <recommendedName>
        <fullName>Probable leucine-rich repeat receptor-like serine/threonine-protein kinase At3g14840</fullName>
        <ecNumber>2.7.11.1</ecNumber>
    </recommendedName>
</protein>
<reference key="1">
    <citation type="journal article" date="2000" name="DNA Res.">
        <title>Structural analysis of Arabidopsis thaliana chromosome 3. II. Sequence features of the 4,251,695 bp regions covered by 90 P1, TAC and BAC clones.</title>
        <authorList>
            <person name="Kaneko T."/>
            <person name="Katoh T."/>
            <person name="Sato S."/>
            <person name="Nakamura Y."/>
            <person name="Asamizu E."/>
            <person name="Tabata S."/>
        </authorList>
    </citation>
    <scope>NUCLEOTIDE SEQUENCE [LARGE SCALE GENOMIC DNA]</scope>
    <source>
        <strain>cv. Columbia</strain>
    </source>
</reference>
<reference key="2">
    <citation type="journal article" date="2017" name="Plant J.">
        <title>Araport11: a complete reannotation of the Arabidopsis thaliana reference genome.</title>
        <authorList>
            <person name="Cheng C.Y."/>
            <person name="Krishnakumar V."/>
            <person name="Chan A.P."/>
            <person name="Thibaud-Nissen F."/>
            <person name="Schobel S."/>
            <person name="Town C.D."/>
        </authorList>
    </citation>
    <scope>GENOME REANNOTATION</scope>
    <source>
        <strain>cv. Columbia</strain>
    </source>
</reference>
<reference key="3">
    <citation type="journal article" date="2003" name="Science">
        <title>Empirical analysis of transcriptional activity in the Arabidopsis genome.</title>
        <authorList>
            <person name="Yamada K."/>
            <person name="Lim J."/>
            <person name="Dale J.M."/>
            <person name="Chen H."/>
            <person name="Shinn P."/>
            <person name="Palm C.J."/>
            <person name="Southwick A.M."/>
            <person name="Wu H.C."/>
            <person name="Kim C.J."/>
            <person name="Nguyen M."/>
            <person name="Pham P.K."/>
            <person name="Cheuk R.F."/>
            <person name="Karlin-Newmann G."/>
            <person name="Liu S.X."/>
            <person name="Lam B."/>
            <person name="Sakano H."/>
            <person name="Wu T."/>
            <person name="Yu G."/>
            <person name="Miranda M."/>
            <person name="Quach H.L."/>
            <person name="Tripp M."/>
            <person name="Chang C.H."/>
            <person name="Lee J.M."/>
            <person name="Toriumi M.J."/>
            <person name="Chan M.M."/>
            <person name="Tang C.C."/>
            <person name="Onodera C.S."/>
            <person name="Deng J.M."/>
            <person name="Akiyama K."/>
            <person name="Ansari Y."/>
            <person name="Arakawa T."/>
            <person name="Banh J."/>
            <person name="Banno F."/>
            <person name="Bowser L."/>
            <person name="Brooks S.Y."/>
            <person name="Carninci P."/>
            <person name="Chao Q."/>
            <person name="Choy N."/>
            <person name="Enju A."/>
            <person name="Goldsmith A.D."/>
            <person name="Gurjal M."/>
            <person name="Hansen N.F."/>
            <person name="Hayashizaki Y."/>
            <person name="Johnson-Hopson C."/>
            <person name="Hsuan V.W."/>
            <person name="Iida K."/>
            <person name="Karnes M."/>
            <person name="Khan S."/>
            <person name="Koesema E."/>
            <person name="Ishida J."/>
            <person name="Jiang P.X."/>
            <person name="Jones T."/>
            <person name="Kawai J."/>
            <person name="Kamiya A."/>
            <person name="Meyers C."/>
            <person name="Nakajima M."/>
            <person name="Narusaka M."/>
            <person name="Seki M."/>
            <person name="Sakurai T."/>
            <person name="Satou M."/>
            <person name="Tamse R."/>
            <person name="Vaysberg M."/>
            <person name="Wallender E.K."/>
            <person name="Wong C."/>
            <person name="Yamamura Y."/>
            <person name="Yuan S."/>
            <person name="Shinozaki K."/>
            <person name="Davis R.W."/>
            <person name="Theologis A."/>
            <person name="Ecker J.R."/>
        </authorList>
    </citation>
    <scope>NUCLEOTIDE SEQUENCE [LARGE SCALE MRNA] (ISOFORM 2)</scope>
    <source>
        <strain>cv. Columbia</strain>
    </source>
</reference>
<reference key="4">
    <citation type="journal article" date="2010" name="BMC Genomics">
        <title>Genome-wide cloning and sequence analysis of leucine-rich repeat receptor-like protein kinase genes in Arabidopsis thaliana.</title>
        <authorList>
            <person name="Gou X."/>
            <person name="He K."/>
            <person name="Yang H."/>
            <person name="Yuan T."/>
            <person name="Lin H."/>
            <person name="Clouse S.D."/>
            <person name="Li J."/>
        </authorList>
    </citation>
    <scope>NUCLEOTIDE SEQUENCE [LARGE SCALE MRNA] (ISOFORM 1)</scope>
    <source>
        <strain>cv. Columbia</strain>
    </source>
</reference>
<reference key="5">
    <citation type="journal article" date="2007" name="Mol. Cell. Proteomics">
        <title>A high content in lipid-modified peripheral proteins and integral receptor kinases features in the arabidopsis plasma membrane proteome.</title>
        <authorList>
            <person name="Marmagne A."/>
            <person name="Ferro M."/>
            <person name="Meinnel T."/>
            <person name="Bruley C."/>
            <person name="Kuhn L."/>
            <person name="Garin J."/>
            <person name="Barbier-Brygoo H."/>
            <person name="Ephritikhine G."/>
        </authorList>
    </citation>
    <scope>IDENTIFICATION BY MASS SPECTROMETRY</scope>
    <scope>SUBCELLULAR LOCATION [LARGE SCALE ANALYSIS]</scope>
</reference>
<sequence>MSLNRQLLFTYYFIVSLILFSDFVSSATLPKEEVDALQSVATALKKSNWNFSVDPCDETLSEGGWRNPNAAKGFEDAVTCNCSSVICHVTNIVLKAQDLQGSLPTDLSGLPFLQELDLTRNYLNGSIPPEWGASSLLNISLLGNRISGSIPKELGNLTTLSGLVLEYNQLSGKIPPELGNLPNLKRLLLSSNNLSGEIPSTFAKLTTLTDLRISDNQFTGAIPDFIQNWKGLEKLVIQASGLVGPIPSAIGLLGTLTDLRITDLSGPESPFPPLRNMTSMKYLILRNCNLTGDLPAYLGQNRKLKNLDLSFNKLSGPIPATYSGLSDVDFIYFTSNMLNGQVPSWMVDQGDTIDITYNNFSKDKTEECQQKSVNTFSSTSPLVANNSSNVSCLSKYTCPKTFYGLHINCGGNEITSNETKYDADTWDTPGYYDSKNGWVSSNTGNFLDDDRTNNGKSKWSNSSELKITNSSIDFRLYTQARLSAISLTYQALCLGKGNYTVNLHFAEIMFNEKNMYSNLGRRYFDIYVQGKREVKDFNIVDEAKGVGKAVVKKFPVMVTNGKLEIRLQWAGKGTQAIPVRGVYGPLISAVSVDPDFIPPKEPGTGTGGGSSVGTVVGSVIASTVFLVLLIGGILWWRGCLRPKSQMEKDFKNLDFQISSFSLRQIKVATDNFDPANKIGEGGFGPVHKGIMTDGTVIAVKQLSAKSKQGNREFLNEIAMISALQHPHLVKLYGCCVEGDQLLLVYEYLENNSLARALFGPQETQIPLNWPMRQKICVGIARGLAYLHEESRLKIVHRDIKATNVLLDKELNPKISDFGLAKLDEEENTHISTRVAGTYGYMAPEYAMRGHLTDKADVYSFGVVALEIVHGKSNTSSRSKADTFYLLDWVHVLREQNTLLEVVDPRLGTDYNKQEALMMIQIGMLCTSPAPGDRPSMSTVVSMLEGHSTVNVEKLLEASVNNEKDEESVRAMKRHYATIGEEEITNTTTTDGPFTSSSTSTANANDLYPVKLDSAYWNTRT</sequence>
<keyword id="KW-0025">Alternative splicing</keyword>
<keyword id="KW-0067">ATP-binding</keyword>
<keyword id="KW-1003">Cell membrane</keyword>
<keyword id="KW-0325">Glycoprotein</keyword>
<keyword id="KW-0418">Kinase</keyword>
<keyword id="KW-0433">Leucine-rich repeat</keyword>
<keyword id="KW-0472">Membrane</keyword>
<keyword id="KW-0547">Nucleotide-binding</keyword>
<keyword id="KW-0597">Phosphoprotein</keyword>
<keyword id="KW-0675">Receptor</keyword>
<keyword id="KW-1185">Reference proteome</keyword>
<keyword id="KW-0677">Repeat</keyword>
<keyword id="KW-0723">Serine/threonine-protein kinase</keyword>
<keyword id="KW-0732">Signal</keyword>
<keyword id="KW-0808">Transferase</keyword>
<keyword id="KW-0812">Transmembrane</keyword>
<keyword id="KW-1133">Transmembrane helix</keyword>
<organism>
    <name type="scientific">Arabidopsis thaliana</name>
    <name type="common">Mouse-ear cress</name>
    <dbReference type="NCBI Taxonomy" id="3702"/>
    <lineage>
        <taxon>Eukaryota</taxon>
        <taxon>Viridiplantae</taxon>
        <taxon>Streptophyta</taxon>
        <taxon>Embryophyta</taxon>
        <taxon>Tracheophyta</taxon>
        <taxon>Spermatophyta</taxon>
        <taxon>Magnoliopsida</taxon>
        <taxon>eudicotyledons</taxon>
        <taxon>Gunneridae</taxon>
        <taxon>Pentapetalae</taxon>
        <taxon>rosids</taxon>
        <taxon>malvids</taxon>
        <taxon>Brassicales</taxon>
        <taxon>Brassicaceae</taxon>
        <taxon>Camelineae</taxon>
        <taxon>Arabidopsis</taxon>
    </lineage>
</organism>
<name>Y3148_ARATH</name>
<gene>
    <name type="primary">LRR-RLK</name>
    <name type="ordered locus">At3g14840</name>
    <name type="ORF">T21E2.2</name>
</gene>
<accession>C0LGN2</accession>
<accession>Q94EW5</accession>
<accession>Q9LH71</accession>